<evidence type="ECO:0000305" key="1"/>
<keyword id="KW-0045">Antibiotic biosynthesis</keyword>
<keyword id="KW-0759">Streptomycin biosynthesis</keyword>
<keyword id="KW-0808">Transferase</keyword>
<feature type="chain" id="PRO_0000215477" description="Putative inosamine-phosphate amidinotransferase 2">
    <location>
        <begin position="1"/>
        <end position="349"/>
    </location>
</feature>
<feature type="site" description="Corresponds to active site cysteine in strB1">
    <location>
        <position position="333"/>
    </location>
</feature>
<name>STRB2_STRGR</name>
<sequence length="349" mass="38219">MSLVGVHNEWDPLEEVVVGTARRPCAGPDRSLLAVEYAEYAGPGRWQEVPTGPYPDRALKETEDELEELCEELRGLGVTVRRPGARDSAAPVRTPDWESDGYGDLCPRDGLLVVGDTVIEAPMALRARFLESLAYKELLVEYLAAGSRWISAPKPRLAEGMYSPSGPSGERLRDLEPVFDAANVLRLGTDLLYLVSDSGNELGARWLQSALGAAYTVHPCRGLYSSTHIDSTLVPLRPGLVLVNPARVTDDNLPGVLRTWQRIECPALAGLGYAGDVPHCSTWIGMSLLVVRPGLVVVDSRHRELMRVLERHGVDVLPLKLTHARMLGGGFHGVTLDIRRTGALETYRF</sequence>
<organism>
    <name type="scientific">Streptomyces griseus</name>
    <dbReference type="NCBI Taxonomy" id="1911"/>
    <lineage>
        <taxon>Bacteria</taxon>
        <taxon>Bacillati</taxon>
        <taxon>Actinomycetota</taxon>
        <taxon>Actinomycetes</taxon>
        <taxon>Kitasatosporales</taxon>
        <taxon>Streptomycetaceae</taxon>
        <taxon>Streptomyces</taxon>
    </lineage>
</organism>
<proteinExistence type="inferred from homology"/>
<accession>P29780</accession>
<dbReference type="EC" id="2.1.4.2"/>
<dbReference type="EMBL" id="X62567">
    <property type="protein sequence ID" value="CAA44441.1"/>
    <property type="molecule type" value="Genomic_DNA"/>
</dbReference>
<dbReference type="PIR" id="S18620">
    <property type="entry name" value="XJSMIG"/>
</dbReference>
<dbReference type="SMR" id="P29780"/>
<dbReference type="BRENDA" id="2.1.4.2">
    <property type="organism ID" value="6037"/>
</dbReference>
<dbReference type="UniPathway" id="UPA00066"/>
<dbReference type="GO" id="GO:0015069">
    <property type="term" value="F:scyllo-inosamine-4-phosphate amidinotransferase activity"/>
    <property type="evidence" value="ECO:0007669"/>
    <property type="project" value="UniProtKB-EC"/>
</dbReference>
<dbReference type="GO" id="GO:0019872">
    <property type="term" value="P:streptomycin biosynthetic process"/>
    <property type="evidence" value="ECO:0007669"/>
    <property type="project" value="UniProtKB-UniPathway"/>
</dbReference>
<dbReference type="CDD" id="cd21135">
    <property type="entry name" value="amidinotransferase_StrB1-like"/>
    <property type="match status" value="1"/>
</dbReference>
<dbReference type="Gene3D" id="3.75.10.10">
    <property type="entry name" value="L-arginine/glycine Amidinotransferase, Chain A"/>
    <property type="match status" value="1"/>
</dbReference>
<dbReference type="InterPro" id="IPR033195">
    <property type="entry name" value="AmidinoTrfase"/>
</dbReference>
<dbReference type="PANTHER" id="PTHR10488">
    <property type="entry name" value="GLYCINE AMIDINOTRANSFERASE, MITOCHONDRIAL"/>
    <property type="match status" value="1"/>
</dbReference>
<dbReference type="PANTHER" id="PTHR10488:SF1">
    <property type="entry name" value="GLYCINE AMIDINOTRANSFERASE, MITOCHONDRIAL"/>
    <property type="match status" value="1"/>
</dbReference>
<dbReference type="SUPFAM" id="SSF55909">
    <property type="entry name" value="Pentein"/>
    <property type="match status" value="1"/>
</dbReference>
<reference key="1">
    <citation type="journal article" date="1991" name="Mol. Gen. Genet.">
        <title>Genetics of streptomycin production in Streptomyces griseus: molecular structure and putative function of genes strELMB2N.</title>
        <authorList>
            <person name="Pissowotzki K."/>
            <person name="Mansouri K."/>
            <person name="Piepersberg W."/>
        </authorList>
    </citation>
    <scope>NUCLEOTIDE SEQUENCE [GENOMIC DNA]</scope>
    <source>
        <strain>N2-3-11</strain>
    </source>
</reference>
<protein>
    <recommendedName>
        <fullName>Putative inosamine-phosphate amidinotransferase 2</fullName>
        <ecNumber>2.1.4.2</ecNumber>
    </recommendedName>
    <alternativeName>
        <fullName>Aminocyclitol amidinotransferase</fullName>
        <shortName>ADT</shortName>
    </alternativeName>
    <alternativeName>
        <fullName>Inosamine-phosphate amidinotransferase II</fullName>
    </alternativeName>
</protein>
<gene>
    <name type="primary">strB2</name>
</gene>
<comment type="function">
    <text>It is not obvious if strB2 participates in streptomycin biosynthesis as an inosamine-phosphate amidinotransferase. Attempt to measure its activity have failed and the nucleophilic cysteine which is the key residue for amidine transfer is not conserved but replaced by a glycine residue.</text>
</comment>
<comment type="catalytic activity">
    <reaction>
        <text>1-amino-1-deoxy-scyllo-inositol 4-phosphate + L-arginine = 1-guanidino-1-deoxy-scyllo-inositol 4-phosphate + L-ornithine</text>
        <dbReference type="Rhea" id="RHEA:13265"/>
        <dbReference type="ChEBI" id="CHEBI:32682"/>
        <dbReference type="ChEBI" id="CHEBI:46911"/>
        <dbReference type="ChEBI" id="CHEBI:57656"/>
        <dbReference type="ChEBI" id="CHEBI:58325"/>
        <dbReference type="EC" id="2.1.4.2"/>
    </reaction>
</comment>
<comment type="pathway">
    <text>Antibiotic biosynthesis; streptomycin biosynthesis.</text>
</comment>
<comment type="similarity">
    <text evidence="1">Belongs to the amidinotransferase family.</text>
</comment>